<accession>Q6AFE0</accession>
<protein>
    <recommendedName>
        <fullName evidence="1">Deoxyuridine 5'-triphosphate nucleotidohydrolase</fullName>
        <shortName evidence="1">dUTPase</shortName>
        <ecNumber evidence="1">3.6.1.23</ecNumber>
    </recommendedName>
    <alternativeName>
        <fullName evidence="1">dUTP pyrophosphatase</fullName>
    </alternativeName>
</protein>
<evidence type="ECO:0000255" key="1">
    <source>
        <dbReference type="HAMAP-Rule" id="MF_00116"/>
    </source>
</evidence>
<keyword id="KW-0378">Hydrolase</keyword>
<keyword id="KW-0460">Magnesium</keyword>
<keyword id="KW-0479">Metal-binding</keyword>
<keyword id="KW-0546">Nucleotide metabolism</keyword>
<keyword id="KW-1185">Reference proteome</keyword>
<name>DUT_LEIXX</name>
<gene>
    <name evidence="1" type="primary">dut</name>
    <name type="ordered locus">Lxx10390</name>
</gene>
<proteinExistence type="inferred from homology"/>
<reference key="1">
    <citation type="journal article" date="2004" name="Mol. Plant Microbe Interact.">
        <title>The genome sequence of the Gram-positive sugarcane pathogen Leifsonia xyli subsp. xyli.</title>
        <authorList>
            <person name="Monteiro-Vitorello C.B."/>
            <person name="Camargo L.E.A."/>
            <person name="Van Sluys M.A."/>
            <person name="Kitajima J.P."/>
            <person name="Truffi D."/>
            <person name="do Amaral A.M."/>
            <person name="Harakava R."/>
            <person name="de Oliveira J.C.F."/>
            <person name="Wood D."/>
            <person name="de Oliveira M.C."/>
            <person name="Miyaki C.Y."/>
            <person name="Takita M.A."/>
            <person name="da Silva A.C.R."/>
            <person name="Furlan L.R."/>
            <person name="Carraro D.M."/>
            <person name="Camarotte G."/>
            <person name="Almeida N.F. Jr."/>
            <person name="Carrer H."/>
            <person name="Coutinho L.L."/>
            <person name="El-Dorry H.A."/>
            <person name="Ferro M.I.T."/>
            <person name="Gagliardi P.R."/>
            <person name="Giglioti E."/>
            <person name="Goldman M.H.S."/>
            <person name="Goldman G.H."/>
            <person name="Kimura E.T."/>
            <person name="Ferro E.S."/>
            <person name="Kuramae E.E."/>
            <person name="Lemos E.G.M."/>
            <person name="Lemos M.V.F."/>
            <person name="Mauro S.M.Z."/>
            <person name="Machado M.A."/>
            <person name="Marino C.L."/>
            <person name="Menck C.F."/>
            <person name="Nunes L.R."/>
            <person name="Oliveira R.C."/>
            <person name="Pereira G.G."/>
            <person name="Siqueira W."/>
            <person name="de Souza A.A."/>
            <person name="Tsai S.M."/>
            <person name="Zanca A.S."/>
            <person name="Simpson A.J.G."/>
            <person name="Brumbley S.M."/>
            <person name="Setubal J.C."/>
        </authorList>
    </citation>
    <scope>NUCLEOTIDE SEQUENCE [LARGE SCALE GENOMIC DNA]</scope>
    <source>
        <strain>CTCB07</strain>
    </source>
</reference>
<feature type="chain" id="PRO_0000182876" description="Deoxyuridine 5'-triphosphate nucleotidohydrolase">
    <location>
        <begin position="1"/>
        <end position="152"/>
    </location>
</feature>
<feature type="binding site" evidence="1">
    <location>
        <begin position="62"/>
        <end position="64"/>
    </location>
    <ligand>
        <name>substrate</name>
    </ligand>
</feature>
<feature type="binding site" evidence="1">
    <location>
        <position position="75"/>
    </location>
    <ligand>
        <name>substrate</name>
    </ligand>
</feature>
<feature type="binding site" evidence="1">
    <location>
        <begin position="79"/>
        <end position="81"/>
    </location>
    <ligand>
        <name>substrate</name>
    </ligand>
</feature>
<sequence length="152" mass="15849">MTDTVDIPIIAKRLPVYAHPGDAGADLCAAEAVTLEPGERHTVPTGVSIALPEGYAAFVVPRSGLAMKHGLTIVNAPGTVDAGYRGEIRVTVLNTDRSMPYDIAVGDRIAQLIVMPVTRAVFVPVDTLPDSHRGTAGFGSSGYTVTQAGEHA</sequence>
<organism>
    <name type="scientific">Leifsonia xyli subsp. xyli (strain CTCB07)</name>
    <dbReference type="NCBI Taxonomy" id="281090"/>
    <lineage>
        <taxon>Bacteria</taxon>
        <taxon>Bacillati</taxon>
        <taxon>Actinomycetota</taxon>
        <taxon>Actinomycetes</taxon>
        <taxon>Micrococcales</taxon>
        <taxon>Microbacteriaceae</taxon>
        <taxon>Leifsonia</taxon>
    </lineage>
</organism>
<dbReference type="EC" id="3.6.1.23" evidence="1"/>
<dbReference type="EMBL" id="AE016822">
    <property type="protein sequence ID" value="AAT88905.1"/>
    <property type="molecule type" value="Genomic_DNA"/>
</dbReference>
<dbReference type="RefSeq" id="WP_011185901.1">
    <property type="nucleotide sequence ID" value="NC_006087.1"/>
</dbReference>
<dbReference type="SMR" id="Q6AFE0"/>
<dbReference type="STRING" id="281090.Lxx10390"/>
<dbReference type="KEGG" id="lxx:Lxx10390"/>
<dbReference type="eggNOG" id="COG0756">
    <property type="taxonomic scope" value="Bacteria"/>
</dbReference>
<dbReference type="HOGENOM" id="CLU_068508_1_3_11"/>
<dbReference type="UniPathway" id="UPA00610">
    <property type="reaction ID" value="UER00666"/>
</dbReference>
<dbReference type="Proteomes" id="UP000001306">
    <property type="component" value="Chromosome"/>
</dbReference>
<dbReference type="GO" id="GO:0004170">
    <property type="term" value="F:dUTP diphosphatase activity"/>
    <property type="evidence" value="ECO:0007669"/>
    <property type="project" value="UniProtKB-UniRule"/>
</dbReference>
<dbReference type="GO" id="GO:0000287">
    <property type="term" value="F:magnesium ion binding"/>
    <property type="evidence" value="ECO:0007669"/>
    <property type="project" value="UniProtKB-UniRule"/>
</dbReference>
<dbReference type="GO" id="GO:0006226">
    <property type="term" value="P:dUMP biosynthetic process"/>
    <property type="evidence" value="ECO:0007669"/>
    <property type="project" value="UniProtKB-UniRule"/>
</dbReference>
<dbReference type="GO" id="GO:0046081">
    <property type="term" value="P:dUTP catabolic process"/>
    <property type="evidence" value="ECO:0007669"/>
    <property type="project" value="InterPro"/>
</dbReference>
<dbReference type="CDD" id="cd07557">
    <property type="entry name" value="trimeric_dUTPase"/>
    <property type="match status" value="1"/>
</dbReference>
<dbReference type="FunFam" id="2.70.40.10:FF:000008">
    <property type="entry name" value="Deoxyuridine 5'-triphosphate nucleotidohydrolase"/>
    <property type="match status" value="1"/>
</dbReference>
<dbReference type="Gene3D" id="2.70.40.10">
    <property type="match status" value="1"/>
</dbReference>
<dbReference type="HAMAP" id="MF_00116">
    <property type="entry name" value="dUTPase_bact"/>
    <property type="match status" value="1"/>
</dbReference>
<dbReference type="InterPro" id="IPR008181">
    <property type="entry name" value="dUTPase"/>
</dbReference>
<dbReference type="InterPro" id="IPR029054">
    <property type="entry name" value="dUTPase-like"/>
</dbReference>
<dbReference type="InterPro" id="IPR036157">
    <property type="entry name" value="dUTPase-like_sf"/>
</dbReference>
<dbReference type="InterPro" id="IPR033704">
    <property type="entry name" value="dUTPase_trimeric"/>
</dbReference>
<dbReference type="NCBIfam" id="TIGR00576">
    <property type="entry name" value="dut"/>
    <property type="match status" value="1"/>
</dbReference>
<dbReference type="NCBIfam" id="NF001862">
    <property type="entry name" value="PRK00601.1"/>
    <property type="match status" value="1"/>
</dbReference>
<dbReference type="PANTHER" id="PTHR11241">
    <property type="entry name" value="DEOXYURIDINE 5'-TRIPHOSPHATE NUCLEOTIDOHYDROLASE"/>
    <property type="match status" value="1"/>
</dbReference>
<dbReference type="PANTHER" id="PTHR11241:SF0">
    <property type="entry name" value="DEOXYURIDINE 5'-TRIPHOSPHATE NUCLEOTIDOHYDROLASE"/>
    <property type="match status" value="1"/>
</dbReference>
<dbReference type="Pfam" id="PF00692">
    <property type="entry name" value="dUTPase"/>
    <property type="match status" value="1"/>
</dbReference>
<dbReference type="SUPFAM" id="SSF51283">
    <property type="entry name" value="dUTPase-like"/>
    <property type="match status" value="1"/>
</dbReference>
<comment type="function">
    <text evidence="1">This enzyme is involved in nucleotide metabolism: it produces dUMP, the immediate precursor of thymidine nucleotides and it decreases the intracellular concentration of dUTP so that uracil cannot be incorporated into DNA.</text>
</comment>
<comment type="catalytic activity">
    <reaction evidence="1">
        <text>dUTP + H2O = dUMP + diphosphate + H(+)</text>
        <dbReference type="Rhea" id="RHEA:10248"/>
        <dbReference type="ChEBI" id="CHEBI:15377"/>
        <dbReference type="ChEBI" id="CHEBI:15378"/>
        <dbReference type="ChEBI" id="CHEBI:33019"/>
        <dbReference type="ChEBI" id="CHEBI:61555"/>
        <dbReference type="ChEBI" id="CHEBI:246422"/>
        <dbReference type="EC" id="3.6.1.23"/>
    </reaction>
</comment>
<comment type="cofactor">
    <cofactor evidence="1">
        <name>Mg(2+)</name>
        <dbReference type="ChEBI" id="CHEBI:18420"/>
    </cofactor>
</comment>
<comment type="pathway">
    <text evidence="1">Pyrimidine metabolism; dUMP biosynthesis; dUMP from dCTP (dUTP route): step 2/2.</text>
</comment>
<comment type="similarity">
    <text evidence="1">Belongs to the dUTPase family.</text>
</comment>